<accession>B4TYF1</accession>
<feature type="chain" id="PRO_1000136545" description="UPF0253 protein YaeP">
    <location>
        <begin position="1"/>
        <end position="66"/>
    </location>
</feature>
<sequence length="66" mass="7156">MEKYCELVRKRYAEIASGDLGYVPDALGCVLKVLNEVAADSALSESVREKAAYAAANLLVSDYVNE</sequence>
<dbReference type="EMBL" id="CP001127">
    <property type="protein sequence ID" value="ACF91899.1"/>
    <property type="molecule type" value="Genomic_DNA"/>
</dbReference>
<dbReference type="RefSeq" id="WP_001518678.1">
    <property type="nucleotide sequence ID" value="NC_011094.1"/>
</dbReference>
<dbReference type="SMR" id="B4TYF1"/>
<dbReference type="KEGG" id="sew:SeSA_A0265"/>
<dbReference type="HOGENOM" id="CLU_190008_0_0_6"/>
<dbReference type="Proteomes" id="UP000001865">
    <property type="component" value="Chromosome"/>
</dbReference>
<dbReference type="HAMAP" id="MF_01064">
    <property type="entry name" value="UPF0253"/>
    <property type="match status" value="1"/>
</dbReference>
<dbReference type="InterPro" id="IPR009624">
    <property type="entry name" value="UPF0253"/>
</dbReference>
<dbReference type="NCBIfam" id="NF003436">
    <property type="entry name" value="PRK04964.1"/>
    <property type="match status" value="1"/>
</dbReference>
<dbReference type="Pfam" id="PF06786">
    <property type="entry name" value="UPF0253"/>
    <property type="match status" value="1"/>
</dbReference>
<reference key="1">
    <citation type="journal article" date="2011" name="J. Bacteriol.">
        <title>Comparative genomics of 28 Salmonella enterica isolates: evidence for CRISPR-mediated adaptive sublineage evolution.</title>
        <authorList>
            <person name="Fricke W.F."/>
            <person name="Mammel M.K."/>
            <person name="McDermott P.F."/>
            <person name="Tartera C."/>
            <person name="White D.G."/>
            <person name="Leclerc J.E."/>
            <person name="Ravel J."/>
            <person name="Cebula T.A."/>
        </authorList>
    </citation>
    <scope>NUCLEOTIDE SEQUENCE [LARGE SCALE GENOMIC DNA]</scope>
    <source>
        <strain>CVM19633</strain>
    </source>
</reference>
<comment type="similarity">
    <text evidence="1">Belongs to the UPF0253 family.</text>
</comment>
<organism>
    <name type="scientific">Salmonella schwarzengrund (strain CVM19633)</name>
    <dbReference type="NCBI Taxonomy" id="439843"/>
    <lineage>
        <taxon>Bacteria</taxon>
        <taxon>Pseudomonadati</taxon>
        <taxon>Pseudomonadota</taxon>
        <taxon>Gammaproteobacteria</taxon>
        <taxon>Enterobacterales</taxon>
        <taxon>Enterobacteriaceae</taxon>
        <taxon>Salmonella</taxon>
    </lineage>
</organism>
<proteinExistence type="inferred from homology"/>
<evidence type="ECO:0000255" key="1">
    <source>
        <dbReference type="HAMAP-Rule" id="MF_01064"/>
    </source>
</evidence>
<gene>
    <name evidence="1" type="primary">yaeP</name>
    <name type="ordered locus">SeSA_A0265</name>
</gene>
<name>YAEP_SALSV</name>
<protein>
    <recommendedName>
        <fullName evidence="1">UPF0253 protein YaeP</fullName>
    </recommendedName>
</protein>